<feature type="peptide" id="PRO_0000420501" description="Extended FMRFamide-6">
    <location>
        <begin position="1"/>
        <end position="9"/>
    </location>
</feature>
<feature type="modified residue" description="Leucine amide" evidence="3">
    <location>
        <position position="9"/>
    </location>
</feature>
<feature type="unsure residue" description="L or I" evidence="3">
    <location>
        <position position="7"/>
    </location>
</feature>
<feature type="unsure residue" description="L or I" evidence="3">
    <location>
        <position position="9"/>
    </location>
</feature>
<dbReference type="GO" id="GO:0005576">
    <property type="term" value="C:extracellular region"/>
    <property type="evidence" value="ECO:0007669"/>
    <property type="project" value="UniProtKB-SubCell"/>
</dbReference>
<dbReference type="GO" id="GO:0007218">
    <property type="term" value="P:neuropeptide signaling pathway"/>
    <property type="evidence" value="ECO:0007669"/>
    <property type="project" value="UniProtKB-KW"/>
</dbReference>
<proteinExistence type="evidence at protein level"/>
<protein>
    <recommendedName>
        <fullName>Extended FMRFamide-6</fullName>
        <shortName evidence="4">FMRFa-6</shortName>
    </recommendedName>
</protein>
<sequence length="9" mass="1075">GRAENFLRL</sequence>
<keyword id="KW-0027">Amidation</keyword>
<keyword id="KW-0903">Direct protein sequencing</keyword>
<keyword id="KW-0527">Neuropeptide</keyword>
<keyword id="KW-0964">Secreted</keyword>
<organism>
    <name type="scientific">Namaquaphasma ookiepense</name>
    <name type="common">Gladiator bug</name>
    <dbReference type="NCBI Taxonomy" id="409167"/>
    <lineage>
        <taxon>Eukaryota</taxon>
        <taxon>Metazoa</taxon>
        <taxon>Ecdysozoa</taxon>
        <taxon>Arthropoda</taxon>
        <taxon>Hexapoda</taxon>
        <taxon>Insecta</taxon>
        <taxon>Pterygota</taxon>
        <taxon>Neoptera</taxon>
        <taxon>Polyneoptera</taxon>
        <taxon>Mantophasmatodea</taxon>
        <taxon>Austrophasmatidae</taxon>
        <taxon>Namaquaphasma</taxon>
    </lineage>
</organism>
<reference evidence="5" key="1">
    <citation type="journal article" date="2012" name="Syst. Biol.">
        <title>Peptidomics-based phylogeny and biogeography of Mantophasmatodea (Hexapoda).</title>
        <authorList>
            <person name="Predel R."/>
            <person name="Neupert S."/>
            <person name="Huetteroth W."/>
            <person name="Kahnt J."/>
            <person name="Waidelich D."/>
            <person name="Roth S."/>
        </authorList>
    </citation>
    <scope>PROTEIN SEQUENCE</scope>
    <scope>AMIDATION AT LEU-9</scope>
    <source>
        <tissue evidence="3">Thoracic perisympathetic organs</tissue>
    </source>
</reference>
<evidence type="ECO:0000250" key="1">
    <source>
        <dbReference type="UniProtKB" id="P34405"/>
    </source>
</evidence>
<evidence type="ECO:0000255" key="2"/>
<evidence type="ECO:0000269" key="3">
    <source>
    </source>
</evidence>
<evidence type="ECO:0000303" key="4">
    <source>
    </source>
</evidence>
<evidence type="ECO:0000305" key="5"/>
<evidence type="ECO:0000305" key="6">
    <source>
    </source>
</evidence>
<comment type="function">
    <text evidence="1">FMRFamides and FMRFamide-like peptides are neuropeptides.</text>
</comment>
<comment type="subcellular location">
    <subcellularLocation>
        <location evidence="6">Secreted</location>
    </subcellularLocation>
</comment>
<comment type="similarity">
    <text evidence="2">Belongs to the FARP (FMRF amide related peptide) family.</text>
</comment>
<name>FAR6_NAMOO</name>
<accession>B0M2T6</accession>